<organism>
    <name type="scientific">Arabidopsis thaliana</name>
    <name type="common">Mouse-ear cress</name>
    <dbReference type="NCBI Taxonomy" id="3702"/>
    <lineage>
        <taxon>Eukaryota</taxon>
        <taxon>Viridiplantae</taxon>
        <taxon>Streptophyta</taxon>
        <taxon>Embryophyta</taxon>
        <taxon>Tracheophyta</taxon>
        <taxon>Spermatophyta</taxon>
        <taxon>Magnoliopsida</taxon>
        <taxon>eudicotyledons</taxon>
        <taxon>Gunneridae</taxon>
        <taxon>Pentapetalae</taxon>
        <taxon>rosids</taxon>
        <taxon>malvids</taxon>
        <taxon>Brassicales</taxon>
        <taxon>Brassicaceae</taxon>
        <taxon>Camelineae</taxon>
        <taxon>Arabidopsis</taxon>
    </lineage>
</organism>
<keyword id="KW-0472">Membrane</keyword>
<keyword id="KW-0479">Metal-binding</keyword>
<keyword id="KW-1185">Reference proteome</keyword>
<keyword id="KW-0808">Transferase</keyword>
<keyword id="KW-0812">Transmembrane</keyword>
<keyword id="KW-1133">Transmembrane helix</keyword>
<keyword id="KW-0833">Ubl conjugation pathway</keyword>
<keyword id="KW-0862">Zinc</keyword>
<keyword id="KW-0863">Zinc-finger</keyword>
<protein>
    <recommendedName>
        <fullName>RING-H2 finger protein ATL75</fullName>
        <ecNumber evidence="4">2.3.2.27</ecNumber>
    </recommendedName>
    <alternativeName>
        <fullName evidence="4">RING-type E3 ubiquitin transferase ATL75</fullName>
    </alternativeName>
</protein>
<gene>
    <name type="primary">ATL75</name>
    <name type="ordered locus">At1g49200</name>
    <name type="ORF">F27J15.33</name>
</gene>
<name>ATL75_ARATH</name>
<comment type="catalytic activity">
    <reaction evidence="4">
        <text>S-ubiquitinyl-[E2 ubiquitin-conjugating enzyme]-L-cysteine + [acceptor protein]-L-lysine = [E2 ubiquitin-conjugating enzyme]-L-cysteine + N(6)-ubiquitinyl-[acceptor protein]-L-lysine.</text>
        <dbReference type="EC" id="2.3.2.27"/>
    </reaction>
</comment>
<comment type="pathway">
    <text>Protein modification; protein ubiquitination.</text>
</comment>
<comment type="subcellular location">
    <subcellularLocation>
        <location evidence="4">Membrane</location>
        <topology evidence="4">Single-pass membrane protein</topology>
    </subcellularLocation>
</comment>
<comment type="domain">
    <text evidence="1">The RING-type zinc finger domain mediates binding to an E2 ubiquitin-conjugating enzyme.</text>
</comment>
<comment type="similarity">
    <text evidence="4">Belongs to the RING-type zinc finger family. ATL subfamily.</text>
</comment>
<comment type="sequence caution" evidence="4">
    <conflict type="erroneous gene model prediction">
        <sequence resource="EMBL-CDS" id="AAF69722"/>
    </conflict>
    <text>The predicted gene At1g49200 has been split into 2 genes: At1g49200 and At1g49210.</text>
</comment>
<accession>Q94BY6</accession>
<accession>Q9M9C0</accession>
<dbReference type="EC" id="2.3.2.27" evidence="4"/>
<dbReference type="EMBL" id="AC016041">
    <property type="protein sequence ID" value="AAF69722.1"/>
    <property type="status" value="ALT_SEQ"/>
    <property type="molecule type" value="Genomic_DNA"/>
</dbReference>
<dbReference type="EMBL" id="CP002684">
    <property type="protein sequence ID" value="AEE32404.1"/>
    <property type="molecule type" value="Genomic_DNA"/>
</dbReference>
<dbReference type="EMBL" id="AY039551">
    <property type="protein sequence ID" value="AAK62606.1"/>
    <property type="molecule type" value="mRNA"/>
</dbReference>
<dbReference type="EMBL" id="AY093753">
    <property type="protein sequence ID" value="AAM10377.1"/>
    <property type="molecule type" value="mRNA"/>
</dbReference>
<dbReference type="RefSeq" id="NP_175346.1">
    <property type="nucleotide sequence ID" value="NM_103810.2"/>
</dbReference>
<dbReference type="SMR" id="Q94BY6"/>
<dbReference type="BioGRID" id="26568">
    <property type="interactions" value="21"/>
</dbReference>
<dbReference type="IntAct" id="Q94BY6">
    <property type="interactions" value="21"/>
</dbReference>
<dbReference type="STRING" id="3702.Q94BY6"/>
<dbReference type="GlyGen" id="Q94BY6">
    <property type="glycosylation" value="1 site"/>
</dbReference>
<dbReference type="PaxDb" id="3702-AT1G49200.1"/>
<dbReference type="EnsemblPlants" id="AT1G49200.1">
    <property type="protein sequence ID" value="AT1G49200.1"/>
    <property type="gene ID" value="AT1G49200"/>
</dbReference>
<dbReference type="GeneID" id="841343"/>
<dbReference type="Gramene" id="AT1G49200.1">
    <property type="protein sequence ID" value="AT1G49200.1"/>
    <property type="gene ID" value="AT1G49200"/>
</dbReference>
<dbReference type="KEGG" id="ath:AT1G49200"/>
<dbReference type="Araport" id="AT1G49200"/>
<dbReference type="TAIR" id="AT1G49200">
    <property type="gene designation" value="ATL75"/>
</dbReference>
<dbReference type="eggNOG" id="KOG0800">
    <property type="taxonomic scope" value="Eukaryota"/>
</dbReference>
<dbReference type="HOGENOM" id="CLU_013137_9_0_1"/>
<dbReference type="InParanoid" id="Q94BY6"/>
<dbReference type="OMA" id="HTQCIDN"/>
<dbReference type="OrthoDB" id="8062037at2759"/>
<dbReference type="PhylomeDB" id="Q94BY6"/>
<dbReference type="UniPathway" id="UPA00143"/>
<dbReference type="PRO" id="PR:Q94BY6"/>
<dbReference type="Proteomes" id="UP000006548">
    <property type="component" value="Chromosome 1"/>
</dbReference>
<dbReference type="ExpressionAtlas" id="Q94BY6">
    <property type="expression patterns" value="baseline and differential"/>
</dbReference>
<dbReference type="GO" id="GO:0016020">
    <property type="term" value="C:membrane"/>
    <property type="evidence" value="ECO:0007669"/>
    <property type="project" value="UniProtKB-SubCell"/>
</dbReference>
<dbReference type="GO" id="GO:0016740">
    <property type="term" value="F:transferase activity"/>
    <property type="evidence" value="ECO:0007669"/>
    <property type="project" value="UniProtKB-KW"/>
</dbReference>
<dbReference type="GO" id="GO:0008270">
    <property type="term" value="F:zinc ion binding"/>
    <property type="evidence" value="ECO:0007669"/>
    <property type="project" value="UniProtKB-KW"/>
</dbReference>
<dbReference type="GO" id="GO:0016567">
    <property type="term" value="P:protein ubiquitination"/>
    <property type="evidence" value="ECO:0007669"/>
    <property type="project" value="UniProtKB-UniPathway"/>
</dbReference>
<dbReference type="CDD" id="cd16461">
    <property type="entry name" value="RING-H2_EL5-like"/>
    <property type="match status" value="1"/>
</dbReference>
<dbReference type="FunFam" id="3.30.40.10:FF:000632">
    <property type="entry name" value="RING-H2 finger protein ATL73"/>
    <property type="match status" value="1"/>
</dbReference>
<dbReference type="Gene3D" id="3.30.40.10">
    <property type="entry name" value="Zinc/RING finger domain, C3HC4 (zinc finger)"/>
    <property type="match status" value="1"/>
</dbReference>
<dbReference type="InterPro" id="IPR044602">
    <property type="entry name" value="ATL10/ATL72-79-like"/>
</dbReference>
<dbReference type="InterPro" id="IPR001841">
    <property type="entry name" value="Znf_RING"/>
</dbReference>
<dbReference type="InterPro" id="IPR013083">
    <property type="entry name" value="Znf_RING/FYVE/PHD"/>
</dbReference>
<dbReference type="PANTHER" id="PTHR46905:SF10">
    <property type="entry name" value="E3 UBIQUITIN-PROTEIN LIGASE ATL76-RELATED"/>
    <property type="match status" value="1"/>
</dbReference>
<dbReference type="PANTHER" id="PTHR46905">
    <property type="entry name" value="RING-H2 FINGER PROTEIN ATL78"/>
    <property type="match status" value="1"/>
</dbReference>
<dbReference type="Pfam" id="PF13639">
    <property type="entry name" value="zf-RING_2"/>
    <property type="match status" value="1"/>
</dbReference>
<dbReference type="SMART" id="SM00184">
    <property type="entry name" value="RING"/>
    <property type="match status" value="1"/>
</dbReference>
<dbReference type="SUPFAM" id="SSF57850">
    <property type="entry name" value="RING/U-box"/>
    <property type="match status" value="1"/>
</dbReference>
<dbReference type="PROSITE" id="PS50089">
    <property type="entry name" value="ZF_RING_2"/>
    <property type="match status" value="1"/>
</dbReference>
<reference key="1">
    <citation type="journal article" date="2000" name="Nature">
        <title>Sequence and analysis of chromosome 1 of the plant Arabidopsis thaliana.</title>
        <authorList>
            <person name="Theologis A."/>
            <person name="Ecker J.R."/>
            <person name="Palm C.J."/>
            <person name="Federspiel N.A."/>
            <person name="Kaul S."/>
            <person name="White O."/>
            <person name="Alonso J."/>
            <person name="Altafi H."/>
            <person name="Araujo R."/>
            <person name="Bowman C.L."/>
            <person name="Brooks S.Y."/>
            <person name="Buehler E."/>
            <person name="Chan A."/>
            <person name="Chao Q."/>
            <person name="Chen H."/>
            <person name="Cheuk R.F."/>
            <person name="Chin C.W."/>
            <person name="Chung M.K."/>
            <person name="Conn L."/>
            <person name="Conway A.B."/>
            <person name="Conway A.R."/>
            <person name="Creasy T.H."/>
            <person name="Dewar K."/>
            <person name="Dunn P."/>
            <person name="Etgu P."/>
            <person name="Feldblyum T.V."/>
            <person name="Feng J.-D."/>
            <person name="Fong B."/>
            <person name="Fujii C.Y."/>
            <person name="Gill J.E."/>
            <person name="Goldsmith A.D."/>
            <person name="Haas B."/>
            <person name="Hansen N.F."/>
            <person name="Hughes B."/>
            <person name="Huizar L."/>
            <person name="Hunter J.L."/>
            <person name="Jenkins J."/>
            <person name="Johnson-Hopson C."/>
            <person name="Khan S."/>
            <person name="Khaykin E."/>
            <person name="Kim C.J."/>
            <person name="Koo H.L."/>
            <person name="Kremenetskaia I."/>
            <person name="Kurtz D.B."/>
            <person name="Kwan A."/>
            <person name="Lam B."/>
            <person name="Langin-Hooper S."/>
            <person name="Lee A."/>
            <person name="Lee J.M."/>
            <person name="Lenz C.A."/>
            <person name="Li J.H."/>
            <person name="Li Y.-P."/>
            <person name="Lin X."/>
            <person name="Liu S.X."/>
            <person name="Liu Z.A."/>
            <person name="Luros J.S."/>
            <person name="Maiti R."/>
            <person name="Marziali A."/>
            <person name="Militscher J."/>
            <person name="Miranda M."/>
            <person name="Nguyen M."/>
            <person name="Nierman W.C."/>
            <person name="Osborne B.I."/>
            <person name="Pai G."/>
            <person name="Peterson J."/>
            <person name="Pham P.K."/>
            <person name="Rizzo M."/>
            <person name="Rooney T."/>
            <person name="Rowley D."/>
            <person name="Sakano H."/>
            <person name="Salzberg S.L."/>
            <person name="Schwartz J.R."/>
            <person name="Shinn P."/>
            <person name="Southwick A.M."/>
            <person name="Sun H."/>
            <person name="Tallon L.J."/>
            <person name="Tambunga G."/>
            <person name="Toriumi M.J."/>
            <person name="Town C.D."/>
            <person name="Utterback T."/>
            <person name="Van Aken S."/>
            <person name="Vaysberg M."/>
            <person name="Vysotskaia V.S."/>
            <person name="Walker M."/>
            <person name="Wu D."/>
            <person name="Yu G."/>
            <person name="Fraser C.M."/>
            <person name="Venter J.C."/>
            <person name="Davis R.W."/>
        </authorList>
    </citation>
    <scope>NUCLEOTIDE SEQUENCE [LARGE SCALE GENOMIC DNA]</scope>
    <source>
        <strain>cv. Columbia</strain>
    </source>
</reference>
<reference key="2">
    <citation type="journal article" date="2017" name="Plant J.">
        <title>Araport11: a complete reannotation of the Arabidopsis thaliana reference genome.</title>
        <authorList>
            <person name="Cheng C.Y."/>
            <person name="Krishnakumar V."/>
            <person name="Chan A.P."/>
            <person name="Thibaud-Nissen F."/>
            <person name="Schobel S."/>
            <person name="Town C.D."/>
        </authorList>
    </citation>
    <scope>GENOME REANNOTATION</scope>
    <source>
        <strain>cv. Columbia</strain>
    </source>
</reference>
<reference key="3">
    <citation type="journal article" date="2003" name="Science">
        <title>Empirical analysis of transcriptional activity in the Arabidopsis genome.</title>
        <authorList>
            <person name="Yamada K."/>
            <person name="Lim J."/>
            <person name="Dale J.M."/>
            <person name="Chen H."/>
            <person name="Shinn P."/>
            <person name="Palm C.J."/>
            <person name="Southwick A.M."/>
            <person name="Wu H.C."/>
            <person name="Kim C.J."/>
            <person name="Nguyen M."/>
            <person name="Pham P.K."/>
            <person name="Cheuk R.F."/>
            <person name="Karlin-Newmann G."/>
            <person name="Liu S.X."/>
            <person name="Lam B."/>
            <person name="Sakano H."/>
            <person name="Wu T."/>
            <person name="Yu G."/>
            <person name="Miranda M."/>
            <person name="Quach H.L."/>
            <person name="Tripp M."/>
            <person name="Chang C.H."/>
            <person name="Lee J.M."/>
            <person name="Toriumi M.J."/>
            <person name="Chan M.M."/>
            <person name="Tang C.C."/>
            <person name="Onodera C.S."/>
            <person name="Deng J.M."/>
            <person name="Akiyama K."/>
            <person name="Ansari Y."/>
            <person name="Arakawa T."/>
            <person name="Banh J."/>
            <person name="Banno F."/>
            <person name="Bowser L."/>
            <person name="Brooks S.Y."/>
            <person name="Carninci P."/>
            <person name="Chao Q."/>
            <person name="Choy N."/>
            <person name="Enju A."/>
            <person name="Goldsmith A.D."/>
            <person name="Gurjal M."/>
            <person name="Hansen N.F."/>
            <person name="Hayashizaki Y."/>
            <person name="Johnson-Hopson C."/>
            <person name="Hsuan V.W."/>
            <person name="Iida K."/>
            <person name="Karnes M."/>
            <person name="Khan S."/>
            <person name="Koesema E."/>
            <person name="Ishida J."/>
            <person name="Jiang P.X."/>
            <person name="Jones T."/>
            <person name="Kawai J."/>
            <person name="Kamiya A."/>
            <person name="Meyers C."/>
            <person name="Nakajima M."/>
            <person name="Narusaka M."/>
            <person name="Seki M."/>
            <person name="Sakurai T."/>
            <person name="Satou M."/>
            <person name="Tamse R."/>
            <person name="Vaysberg M."/>
            <person name="Wallender E.K."/>
            <person name="Wong C."/>
            <person name="Yamamura Y."/>
            <person name="Yuan S."/>
            <person name="Shinozaki K."/>
            <person name="Davis R.W."/>
            <person name="Theologis A."/>
            <person name="Ecker J.R."/>
        </authorList>
    </citation>
    <scope>NUCLEOTIDE SEQUENCE [LARGE SCALE MRNA]</scope>
    <source>
        <strain>cv. Columbia</strain>
    </source>
</reference>
<reference key="4">
    <citation type="journal article" date="2002" name="Genome Biol.">
        <title>Evaluation and classification of RING-finger domains encoded by the Arabidopsis genome.</title>
        <authorList>
            <person name="Kosarev P."/>
            <person name="Mayer K.F.X."/>
            <person name="Hardtke C.S."/>
        </authorList>
    </citation>
    <scope>GENE FAMILY ORGANIZATION</scope>
</reference>
<reference key="5">
    <citation type="journal article" date="2006" name="J. Mol. Evol.">
        <title>The ATL gene family from Arabidopsis thaliana and Oryza sativa comprises a large number of putative ubiquitin ligases of the RING-H2 type.</title>
        <authorList>
            <person name="Serrano M."/>
            <person name="Parra S."/>
            <person name="Alcaraz L.D."/>
            <person name="Guzman P."/>
        </authorList>
    </citation>
    <scope>NOMENCLATURE</scope>
    <scope>GENE FAMILY ORGANIZATION</scope>
</reference>
<feature type="chain" id="PRO_0000055766" description="RING-H2 finger protein ATL75">
    <location>
        <begin position="1"/>
        <end position="226"/>
    </location>
</feature>
<feature type="transmembrane region" description="Helical" evidence="2">
    <location>
        <begin position="60"/>
        <end position="80"/>
    </location>
</feature>
<feature type="zinc finger region" description="RING-type; atypical" evidence="3">
    <location>
        <begin position="136"/>
        <end position="178"/>
    </location>
</feature>
<sequence length="226" mass="24790">MAANELASSSVQAFQEQSLGGFVSRKLLLHNPFDHNTQRAFAVAPSPLITHENNLSGNVLMLLSVLICGIICCLGLHYIIRCAFRRTSSFMISEPIAGLSTPCGSSNKGINKKALRMFPVVSYSPEMNLPGLGEECVICLSDFVSGEQIRMLPKCHHGFHVRCIDKWLQQHLTCPKCRHCLVETCQKILGDFSQADQVAATPTASVIVRIAPLEPEGRVNILRESS</sequence>
<proteinExistence type="evidence at transcript level"/>
<evidence type="ECO:0000250" key="1"/>
<evidence type="ECO:0000255" key="2"/>
<evidence type="ECO:0000255" key="3">
    <source>
        <dbReference type="PROSITE-ProRule" id="PRU00175"/>
    </source>
</evidence>
<evidence type="ECO:0000305" key="4"/>